<sequence length="428" mass="46415">MPAIVLVGAQWGDEGKGKATDALGARVDYVVKFNGGNNAGHTVVVGDEKYALHLLPSGILTPGVTPVIGNGVVVDLSVLFEEIDALTARGVDCSKLLLSASAHVIAPYHRVLDQVTERFLGSRKIGTTGRGIGPTYADKINRIGIRVQDLFDESILRQKVEGALDQKNHLLLKVYNRRAVSVDETVENLLSFRDRIAPMVTDVSLELSRALDRDEIVLFEGGQATMLDIDHGTYPYVTSSNATAAGACTGAGIPPNRVDRIVAVVKAYTTRVGEGPFPTELLDADGEKLRQDGGEFGTTTGRPRRTGWYDAVISRYSARINGVTDFVLTKLDTLTGWERIPVCVAYDVDGVRHDEIPMSQSDFHHAKPIYEFFDGWTEDITGARSMEDLPKNAQAYVEALEAISGSRISAVGVGPDREQTVVRHDLLG</sequence>
<name>PURA_KINRD</name>
<gene>
    <name evidence="1" type="primary">purA</name>
    <name type="ordered locus">Krad_4119</name>
</gene>
<reference key="1">
    <citation type="journal article" date="2008" name="PLoS ONE">
        <title>Survival in nuclear waste, extreme resistance, and potential applications gleaned from the genome sequence of Kineococcus radiotolerans SRS30216.</title>
        <authorList>
            <person name="Bagwell C.E."/>
            <person name="Bhat S."/>
            <person name="Hawkins G.M."/>
            <person name="Smith B.W."/>
            <person name="Biswas T."/>
            <person name="Hoover T.R."/>
            <person name="Saunders E."/>
            <person name="Han C.S."/>
            <person name="Tsodikov O.V."/>
            <person name="Shimkets L.J."/>
        </authorList>
    </citation>
    <scope>NUCLEOTIDE SEQUENCE [LARGE SCALE GENOMIC DNA]</scope>
    <source>
        <strain>ATCC BAA-149 / DSM 14245 / SRS30216</strain>
    </source>
</reference>
<keyword id="KW-0963">Cytoplasm</keyword>
<keyword id="KW-0342">GTP-binding</keyword>
<keyword id="KW-0436">Ligase</keyword>
<keyword id="KW-0460">Magnesium</keyword>
<keyword id="KW-0479">Metal-binding</keyword>
<keyword id="KW-0547">Nucleotide-binding</keyword>
<keyword id="KW-0658">Purine biosynthesis</keyword>
<keyword id="KW-1185">Reference proteome</keyword>
<proteinExistence type="inferred from homology"/>
<comment type="function">
    <text evidence="1">Plays an important role in the de novo pathway of purine nucleotide biosynthesis. Catalyzes the first committed step in the biosynthesis of AMP from IMP.</text>
</comment>
<comment type="catalytic activity">
    <reaction evidence="1">
        <text>IMP + L-aspartate + GTP = N(6)-(1,2-dicarboxyethyl)-AMP + GDP + phosphate + 2 H(+)</text>
        <dbReference type="Rhea" id="RHEA:15753"/>
        <dbReference type="ChEBI" id="CHEBI:15378"/>
        <dbReference type="ChEBI" id="CHEBI:29991"/>
        <dbReference type="ChEBI" id="CHEBI:37565"/>
        <dbReference type="ChEBI" id="CHEBI:43474"/>
        <dbReference type="ChEBI" id="CHEBI:57567"/>
        <dbReference type="ChEBI" id="CHEBI:58053"/>
        <dbReference type="ChEBI" id="CHEBI:58189"/>
        <dbReference type="EC" id="6.3.4.4"/>
    </reaction>
</comment>
<comment type="cofactor">
    <cofactor evidence="1">
        <name>Mg(2+)</name>
        <dbReference type="ChEBI" id="CHEBI:18420"/>
    </cofactor>
    <text evidence="1">Binds 1 Mg(2+) ion per subunit.</text>
</comment>
<comment type="pathway">
    <text evidence="1">Purine metabolism; AMP biosynthesis via de novo pathway; AMP from IMP: step 1/2.</text>
</comment>
<comment type="subunit">
    <text evidence="1">Homodimer.</text>
</comment>
<comment type="subcellular location">
    <subcellularLocation>
        <location evidence="1">Cytoplasm</location>
    </subcellularLocation>
</comment>
<comment type="similarity">
    <text evidence="1">Belongs to the adenylosuccinate synthetase family.</text>
</comment>
<feature type="chain" id="PRO_1000073950" description="Adenylosuccinate synthetase">
    <location>
        <begin position="1"/>
        <end position="428"/>
    </location>
</feature>
<feature type="active site" description="Proton acceptor" evidence="1">
    <location>
        <position position="13"/>
    </location>
</feature>
<feature type="active site" description="Proton donor" evidence="1">
    <location>
        <position position="41"/>
    </location>
</feature>
<feature type="binding site" evidence="1">
    <location>
        <begin position="12"/>
        <end position="18"/>
    </location>
    <ligand>
        <name>GTP</name>
        <dbReference type="ChEBI" id="CHEBI:37565"/>
    </ligand>
</feature>
<feature type="binding site" description="in other chain" evidence="1">
    <location>
        <begin position="13"/>
        <end position="16"/>
    </location>
    <ligand>
        <name>IMP</name>
        <dbReference type="ChEBI" id="CHEBI:58053"/>
        <note>ligand shared between dimeric partners</note>
    </ligand>
</feature>
<feature type="binding site" evidence="1">
    <location>
        <position position="13"/>
    </location>
    <ligand>
        <name>Mg(2+)</name>
        <dbReference type="ChEBI" id="CHEBI:18420"/>
    </ligand>
</feature>
<feature type="binding site" description="in other chain" evidence="1">
    <location>
        <begin position="38"/>
        <end position="41"/>
    </location>
    <ligand>
        <name>IMP</name>
        <dbReference type="ChEBI" id="CHEBI:58053"/>
        <note>ligand shared between dimeric partners</note>
    </ligand>
</feature>
<feature type="binding site" evidence="1">
    <location>
        <begin position="40"/>
        <end position="42"/>
    </location>
    <ligand>
        <name>GTP</name>
        <dbReference type="ChEBI" id="CHEBI:37565"/>
    </ligand>
</feature>
<feature type="binding site" evidence="1">
    <location>
        <position position="40"/>
    </location>
    <ligand>
        <name>Mg(2+)</name>
        <dbReference type="ChEBI" id="CHEBI:18420"/>
    </ligand>
</feature>
<feature type="binding site" description="in other chain" evidence="1">
    <location>
        <position position="128"/>
    </location>
    <ligand>
        <name>IMP</name>
        <dbReference type="ChEBI" id="CHEBI:58053"/>
        <note>ligand shared between dimeric partners</note>
    </ligand>
</feature>
<feature type="binding site" evidence="1">
    <location>
        <position position="142"/>
    </location>
    <ligand>
        <name>IMP</name>
        <dbReference type="ChEBI" id="CHEBI:58053"/>
        <note>ligand shared between dimeric partners</note>
    </ligand>
</feature>
<feature type="binding site" description="in other chain" evidence="1">
    <location>
        <position position="223"/>
    </location>
    <ligand>
        <name>IMP</name>
        <dbReference type="ChEBI" id="CHEBI:58053"/>
        <note>ligand shared between dimeric partners</note>
    </ligand>
</feature>
<feature type="binding site" description="in other chain" evidence="1">
    <location>
        <position position="238"/>
    </location>
    <ligand>
        <name>IMP</name>
        <dbReference type="ChEBI" id="CHEBI:58053"/>
        <note>ligand shared between dimeric partners</note>
    </ligand>
</feature>
<feature type="binding site" evidence="1">
    <location>
        <begin position="298"/>
        <end position="304"/>
    </location>
    <ligand>
        <name>substrate</name>
    </ligand>
</feature>
<feature type="binding site" description="in other chain" evidence="1">
    <location>
        <position position="302"/>
    </location>
    <ligand>
        <name>IMP</name>
        <dbReference type="ChEBI" id="CHEBI:58053"/>
        <note>ligand shared between dimeric partners</note>
    </ligand>
</feature>
<feature type="binding site" evidence="1">
    <location>
        <position position="304"/>
    </location>
    <ligand>
        <name>GTP</name>
        <dbReference type="ChEBI" id="CHEBI:37565"/>
    </ligand>
</feature>
<feature type="binding site" evidence="1">
    <location>
        <begin position="330"/>
        <end position="332"/>
    </location>
    <ligand>
        <name>GTP</name>
        <dbReference type="ChEBI" id="CHEBI:37565"/>
    </ligand>
</feature>
<feature type="binding site" evidence="1">
    <location>
        <begin position="412"/>
        <end position="414"/>
    </location>
    <ligand>
        <name>GTP</name>
        <dbReference type="ChEBI" id="CHEBI:37565"/>
    </ligand>
</feature>
<accession>A6WFJ3</accession>
<protein>
    <recommendedName>
        <fullName evidence="1">Adenylosuccinate synthetase</fullName>
        <shortName evidence="1">AMPSase</shortName>
        <shortName evidence="1">AdSS</shortName>
        <ecNumber evidence="1">6.3.4.4</ecNumber>
    </recommendedName>
    <alternativeName>
        <fullName evidence="1">IMP--aspartate ligase</fullName>
    </alternativeName>
</protein>
<evidence type="ECO:0000255" key="1">
    <source>
        <dbReference type="HAMAP-Rule" id="MF_00011"/>
    </source>
</evidence>
<dbReference type="EC" id="6.3.4.4" evidence="1"/>
<dbReference type="EMBL" id="CP000750">
    <property type="protein sequence ID" value="ABS05582.1"/>
    <property type="molecule type" value="Genomic_DNA"/>
</dbReference>
<dbReference type="RefSeq" id="WP_012086130.1">
    <property type="nucleotide sequence ID" value="NC_009664.2"/>
</dbReference>
<dbReference type="SMR" id="A6WFJ3"/>
<dbReference type="STRING" id="266940.Krad_4119"/>
<dbReference type="KEGG" id="kra:Krad_4119"/>
<dbReference type="eggNOG" id="COG0104">
    <property type="taxonomic scope" value="Bacteria"/>
</dbReference>
<dbReference type="HOGENOM" id="CLU_029848_0_0_11"/>
<dbReference type="OrthoDB" id="9807553at2"/>
<dbReference type="UniPathway" id="UPA00075">
    <property type="reaction ID" value="UER00335"/>
</dbReference>
<dbReference type="Proteomes" id="UP000001116">
    <property type="component" value="Chromosome"/>
</dbReference>
<dbReference type="GO" id="GO:0005737">
    <property type="term" value="C:cytoplasm"/>
    <property type="evidence" value="ECO:0007669"/>
    <property type="project" value="UniProtKB-SubCell"/>
</dbReference>
<dbReference type="GO" id="GO:0004019">
    <property type="term" value="F:adenylosuccinate synthase activity"/>
    <property type="evidence" value="ECO:0007669"/>
    <property type="project" value="UniProtKB-UniRule"/>
</dbReference>
<dbReference type="GO" id="GO:0005525">
    <property type="term" value="F:GTP binding"/>
    <property type="evidence" value="ECO:0007669"/>
    <property type="project" value="UniProtKB-UniRule"/>
</dbReference>
<dbReference type="GO" id="GO:0000287">
    <property type="term" value="F:magnesium ion binding"/>
    <property type="evidence" value="ECO:0007669"/>
    <property type="project" value="UniProtKB-UniRule"/>
</dbReference>
<dbReference type="GO" id="GO:0044208">
    <property type="term" value="P:'de novo' AMP biosynthetic process"/>
    <property type="evidence" value="ECO:0007669"/>
    <property type="project" value="UniProtKB-UniRule"/>
</dbReference>
<dbReference type="GO" id="GO:0046040">
    <property type="term" value="P:IMP metabolic process"/>
    <property type="evidence" value="ECO:0007669"/>
    <property type="project" value="TreeGrafter"/>
</dbReference>
<dbReference type="CDD" id="cd03108">
    <property type="entry name" value="AdSS"/>
    <property type="match status" value="1"/>
</dbReference>
<dbReference type="FunFam" id="1.10.300.10:FF:000001">
    <property type="entry name" value="Adenylosuccinate synthetase"/>
    <property type="match status" value="1"/>
</dbReference>
<dbReference type="FunFam" id="3.90.170.10:FF:000001">
    <property type="entry name" value="Adenylosuccinate synthetase"/>
    <property type="match status" value="1"/>
</dbReference>
<dbReference type="Gene3D" id="3.40.440.10">
    <property type="entry name" value="Adenylosuccinate Synthetase, subunit A, domain 1"/>
    <property type="match status" value="1"/>
</dbReference>
<dbReference type="Gene3D" id="1.10.300.10">
    <property type="entry name" value="Adenylosuccinate Synthetase, subunit A, domain 2"/>
    <property type="match status" value="1"/>
</dbReference>
<dbReference type="Gene3D" id="3.90.170.10">
    <property type="entry name" value="Adenylosuccinate Synthetase, subunit A, domain 3"/>
    <property type="match status" value="1"/>
</dbReference>
<dbReference type="HAMAP" id="MF_00011">
    <property type="entry name" value="Adenylosucc_synth"/>
    <property type="match status" value="1"/>
</dbReference>
<dbReference type="InterPro" id="IPR018220">
    <property type="entry name" value="Adenylosuccin_syn_GTP-bd"/>
</dbReference>
<dbReference type="InterPro" id="IPR033128">
    <property type="entry name" value="Adenylosuccin_syn_Lys_AS"/>
</dbReference>
<dbReference type="InterPro" id="IPR042109">
    <property type="entry name" value="Adenylosuccinate_synth_dom1"/>
</dbReference>
<dbReference type="InterPro" id="IPR042110">
    <property type="entry name" value="Adenylosuccinate_synth_dom2"/>
</dbReference>
<dbReference type="InterPro" id="IPR042111">
    <property type="entry name" value="Adenylosuccinate_synth_dom3"/>
</dbReference>
<dbReference type="InterPro" id="IPR001114">
    <property type="entry name" value="Adenylosuccinate_synthetase"/>
</dbReference>
<dbReference type="InterPro" id="IPR027417">
    <property type="entry name" value="P-loop_NTPase"/>
</dbReference>
<dbReference type="NCBIfam" id="NF002223">
    <property type="entry name" value="PRK01117.1"/>
    <property type="match status" value="1"/>
</dbReference>
<dbReference type="NCBIfam" id="TIGR00184">
    <property type="entry name" value="purA"/>
    <property type="match status" value="1"/>
</dbReference>
<dbReference type="PANTHER" id="PTHR11846">
    <property type="entry name" value="ADENYLOSUCCINATE SYNTHETASE"/>
    <property type="match status" value="1"/>
</dbReference>
<dbReference type="PANTHER" id="PTHR11846:SF0">
    <property type="entry name" value="ADENYLOSUCCINATE SYNTHETASE"/>
    <property type="match status" value="1"/>
</dbReference>
<dbReference type="Pfam" id="PF00709">
    <property type="entry name" value="Adenylsucc_synt"/>
    <property type="match status" value="1"/>
</dbReference>
<dbReference type="SMART" id="SM00788">
    <property type="entry name" value="Adenylsucc_synt"/>
    <property type="match status" value="1"/>
</dbReference>
<dbReference type="SUPFAM" id="SSF52540">
    <property type="entry name" value="P-loop containing nucleoside triphosphate hydrolases"/>
    <property type="match status" value="1"/>
</dbReference>
<dbReference type="PROSITE" id="PS01266">
    <property type="entry name" value="ADENYLOSUCCIN_SYN_1"/>
    <property type="match status" value="1"/>
</dbReference>
<dbReference type="PROSITE" id="PS00513">
    <property type="entry name" value="ADENYLOSUCCIN_SYN_2"/>
    <property type="match status" value="1"/>
</dbReference>
<organism>
    <name type="scientific">Kineococcus radiotolerans (strain ATCC BAA-149 / DSM 14245 / SRS30216)</name>
    <dbReference type="NCBI Taxonomy" id="266940"/>
    <lineage>
        <taxon>Bacteria</taxon>
        <taxon>Bacillati</taxon>
        <taxon>Actinomycetota</taxon>
        <taxon>Actinomycetes</taxon>
        <taxon>Kineosporiales</taxon>
        <taxon>Kineosporiaceae</taxon>
        <taxon>Kineococcus</taxon>
    </lineage>
</organism>